<comment type="function">
    <text evidence="7">Core subunit of the mitochondrial membrane respiratory chain NADH dehydrogenase (Complex I) which catalyzes electron transfer from NADH through the respiratory chain, using ubiquinone as an electron acceptor (PubMed:22499348). Essential for the catalytic activity and assembly of complex I (PubMed:22499348).</text>
</comment>
<comment type="catalytic activity">
    <reaction evidence="7">
        <text>a ubiquinone + NADH + 5 H(+)(in) = a ubiquinol + NAD(+) + 4 H(+)(out)</text>
        <dbReference type="Rhea" id="RHEA:29091"/>
        <dbReference type="Rhea" id="RHEA-COMP:9565"/>
        <dbReference type="Rhea" id="RHEA-COMP:9566"/>
        <dbReference type="ChEBI" id="CHEBI:15378"/>
        <dbReference type="ChEBI" id="CHEBI:16389"/>
        <dbReference type="ChEBI" id="CHEBI:17976"/>
        <dbReference type="ChEBI" id="CHEBI:57540"/>
        <dbReference type="ChEBI" id="CHEBI:57945"/>
        <dbReference type="EC" id="7.1.1.2"/>
    </reaction>
</comment>
<comment type="cofactor">
    <cofactor evidence="2">
        <name>[4Fe-4S] cluster</name>
        <dbReference type="ChEBI" id="CHEBI:49883"/>
    </cofactor>
    <text evidence="2">Binds 2 [4Fe-4S] cluster.</text>
</comment>
<comment type="subunit">
    <text evidence="1 4 8">Core subunit of respiratory chain NADH dehydrogenase (Complex I) which is composed of 45 different subunits (PubMed:12611891). This is a component of the iron-sulfur (IP) fragment of the enzyme (By similarity). Interacts with RAB5IF (PubMed:31536960).</text>
</comment>
<comment type="subcellular location">
    <subcellularLocation>
        <location evidence="12 13">Mitochondrion inner membrane</location>
        <topology evidence="1">Peripheral membrane protein</topology>
        <orientation evidence="1">Matrix side</orientation>
    </subcellularLocation>
</comment>
<comment type="tissue specificity">
    <text evidence="9">Expressed in all tissues with the highest level in heart and skeletal muscle and the lowest level in lung.</text>
</comment>
<comment type="disease" evidence="5 6 7 10">
    <disease id="DI-05401">
        <name>Mitochondrial complex I deficiency, nuclear type 2</name>
        <acronym>MC1DN2</acronym>
        <description>A form of mitochondrial complex I deficiency, the most common biochemical signature of mitochondrial disorders, a group of highly heterogeneous conditions characterized by defective oxidative phosphorylation, which collectively affects 1 in 5-10000 live births. Clinical disorders have variable severity, ranging from lethal neonatal disease to adult-onset neurodegenerative disorders. Phenotypes include macrocephaly with progressive leukodystrophy, non-specific encephalopathy, cardiomyopathy, myopathy, liver disease, Leigh syndrome, Leber hereditary optic neuropathy, and some forms of Parkinson disease. MC1DN2 inheritance is autosomal recessive.</description>
        <dbReference type="MIM" id="618222"/>
    </disease>
    <text>The disease is caused by variants affecting the gene represented in this entry.</text>
</comment>
<comment type="similarity">
    <text evidence="11">Belongs to the complex I 23 kDa subunit family.</text>
</comment>
<reference key="1">
    <citation type="journal article" date="1997" name="Biochim. Biophys. Acta">
        <title>cDNA sequence and chromosomal localization of the NDUFS8 human gene coding for the 23 kDa subunit of the mitochondrial complex I.</title>
        <authorList>
            <person name="Procaccio V."/>
            <person name="Depetris D."/>
            <person name="Soularue P."/>
            <person name="Mattei M.-G."/>
            <person name="Lunardi J."/>
            <person name="Issartel J.-P."/>
        </authorList>
    </citation>
    <scope>NUCLEOTIDE SEQUENCE [GENOMIC DNA / MRNA]</scope>
</reference>
<reference key="2">
    <citation type="journal article" date="1998" name="Gene">
        <title>Genomic structure of the human NDUFS8 gene coding for the iron-sulfur TYKY subunit of the mitochondrial NADH:ubiquinone oxidoreductase.</title>
        <authorList>
            <person name="de Sury R."/>
            <person name="Martinez P."/>
            <person name="Procaccio V."/>
            <person name="Lunardi J."/>
            <person name="Issartel J.-P."/>
        </authorList>
    </citation>
    <scope>NUCLEOTIDE SEQUENCE [GENOMIC DNA]</scope>
    <scope>SUBCELLULAR LOCATION</scope>
    <scope>TISSUE SPECIFICITY</scope>
</reference>
<reference key="3">
    <citation type="journal article" date="2004" name="Nat. Genet.">
        <title>Complete sequencing and characterization of 21,243 full-length human cDNAs.</title>
        <authorList>
            <person name="Ota T."/>
            <person name="Suzuki Y."/>
            <person name="Nishikawa T."/>
            <person name="Otsuki T."/>
            <person name="Sugiyama T."/>
            <person name="Irie R."/>
            <person name="Wakamatsu A."/>
            <person name="Hayashi K."/>
            <person name="Sato H."/>
            <person name="Nagai K."/>
            <person name="Kimura K."/>
            <person name="Makita H."/>
            <person name="Sekine M."/>
            <person name="Obayashi M."/>
            <person name="Nishi T."/>
            <person name="Shibahara T."/>
            <person name="Tanaka T."/>
            <person name="Ishii S."/>
            <person name="Yamamoto J."/>
            <person name="Saito K."/>
            <person name="Kawai Y."/>
            <person name="Isono Y."/>
            <person name="Nakamura Y."/>
            <person name="Nagahari K."/>
            <person name="Murakami K."/>
            <person name="Yasuda T."/>
            <person name="Iwayanagi T."/>
            <person name="Wagatsuma M."/>
            <person name="Shiratori A."/>
            <person name="Sudo H."/>
            <person name="Hosoiri T."/>
            <person name="Kaku Y."/>
            <person name="Kodaira H."/>
            <person name="Kondo H."/>
            <person name="Sugawara M."/>
            <person name="Takahashi M."/>
            <person name="Kanda K."/>
            <person name="Yokoi T."/>
            <person name="Furuya T."/>
            <person name="Kikkawa E."/>
            <person name="Omura Y."/>
            <person name="Abe K."/>
            <person name="Kamihara K."/>
            <person name="Katsuta N."/>
            <person name="Sato K."/>
            <person name="Tanikawa M."/>
            <person name="Yamazaki M."/>
            <person name="Ninomiya K."/>
            <person name="Ishibashi T."/>
            <person name="Yamashita H."/>
            <person name="Murakawa K."/>
            <person name="Fujimori K."/>
            <person name="Tanai H."/>
            <person name="Kimata M."/>
            <person name="Watanabe M."/>
            <person name="Hiraoka S."/>
            <person name="Chiba Y."/>
            <person name="Ishida S."/>
            <person name="Ono Y."/>
            <person name="Takiguchi S."/>
            <person name="Watanabe S."/>
            <person name="Yosida M."/>
            <person name="Hotuta T."/>
            <person name="Kusano J."/>
            <person name="Kanehori K."/>
            <person name="Takahashi-Fujii A."/>
            <person name="Hara H."/>
            <person name="Tanase T.-O."/>
            <person name="Nomura Y."/>
            <person name="Togiya S."/>
            <person name="Komai F."/>
            <person name="Hara R."/>
            <person name="Takeuchi K."/>
            <person name="Arita M."/>
            <person name="Imose N."/>
            <person name="Musashino K."/>
            <person name="Yuuki H."/>
            <person name="Oshima A."/>
            <person name="Sasaki N."/>
            <person name="Aotsuka S."/>
            <person name="Yoshikawa Y."/>
            <person name="Matsunawa H."/>
            <person name="Ichihara T."/>
            <person name="Shiohata N."/>
            <person name="Sano S."/>
            <person name="Moriya S."/>
            <person name="Momiyama H."/>
            <person name="Satoh N."/>
            <person name="Takami S."/>
            <person name="Terashima Y."/>
            <person name="Suzuki O."/>
            <person name="Nakagawa S."/>
            <person name="Senoh A."/>
            <person name="Mizoguchi H."/>
            <person name="Goto Y."/>
            <person name="Shimizu F."/>
            <person name="Wakebe H."/>
            <person name="Hishigaki H."/>
            <person name="Watanabe T."/>
            <person name="Sugiyama A."/>
            <person name="Takemoto M."/>
            <person name="Kawakami B."/>
            <person name="Yamazaki M."/>
            <person name="Watanabe K."/>
            <person name="Kumagai A."/>
            <person name="Itakura S."/>
            <person name="Fukuzumi Y."/>
            <person name="Fujimori Y."/>
            <person name="Komiyama M."/>
            <person name="Tashiro H."/>
            <person name="Tanigami A."/>
            <person name="Fujiwara T."/>
            <person name="Ono T."/>
            <person name="Yamada K."/>
            <person name="Fujii Y."/>
            <person name="Ozaki K."/>
            <person name="Hirao M."/>
            <person name="Ohmori Y."/>
            <person name="Kawabata A."/>
            <person name="Hikiji T."/>
            <person name="Kobatake N."/>
            <person name="Inagaki H."/>
            <person name="Ikema Y."/>
            <person name="Okamoto S."/>
            <person name="Okitani R."/>
            <person name="Kawakami T."/>
            <person name="Noguchi S."/>
            <person name="Itoh T."/>
            <person name="Shigeta K."/>
            <person name="Senba T."/>
            <person name="Matsumura K."/>
            <person name="Nakajima Y."/>
            <person name="Mizuno T."/>
            <person name="Morinaga M."/>
            <person name="Sasaki M."/>
            <person name="Togashi T."/>
            <person name="Oyama M."/>
            <person name="Hata H."/>
            <person name="Watanabe M."/>
            <person name="Komatsu T."/>
            <person name="Mizushima-Sugano J."/>
            <person name="Satoh T."/>
            <person name="Shirai Y."/>
            <person name="Takahashi Y."/>
            <person name="Nakagawa K."/>
            <person name="Okumura K."/>
            <person name="Nagase T."/>
            <person name="Nomura N."/>
            <person name="Kikuchi H."/>
            <person name="Masuho Y."/>
            <person name="Yamashita R."/>
            <person name="Nakai K."/>
            <person name="Yada T."/>
            <person name="Nakamura Y."/>
            <person name="Ohara O."/>
            <person name="Isogai T."/>
            <person name="Sugano S."/>
        </authorList>
    </citation>
    <scope>NUCLEOTIDE SEQUENCE [LARGE SCALE MRNA]</scope>
    <source>
        <tissue>Uterus</tissue>
    </source>
</reference>
<reference key="4">
    <citation type="journal article" date="2004" name="Genome Res.">
        <title>The status, quality, and expansion of the NIH full-length cDNA project: the Mammalian Gene Collection (MGC).</title>
        <authorList>
            <consortium name="The MGC Project Team"/>
        </authorList>
    </citation>
    <scope>NUCLEOTIDE SEQUENCE [LARGE SCALE MRNA]</scope>
</reference>
<reference key="5">
    <citation type="journal article" date="2003" name="J. Biol. Chem.">
        <title>The subunit composition of the human NADH dehydrogenase obtained by rapid one-step immunopurification.</title>
        <authorList>
            <person name="Murray J."/>
            <person name="Zhang B."/>
            <person name="Taylor S.W."/>
            <person name="Oglesbee D."/>
            <person name="Fahy E."/>
            <person name="Marusich M.F."/>
            <person name="Ghosh S.S."/>
            <person name="Capaldi R.A."/>
        </authorList>
    </citation>
    <scope>IDENTIFICATION BY MASS SPECTROMETRY</scope>
    <scope>IDENTIFICATION IN THE NADH-UBIQUINONE OXIDOREDUCTASE COMPLEX</scope>
    <scope>SUBCELLULAR LOCATION</scope>
</reference>
<reference key="6">
    <citation type="journal article" date="2011" name="BMC Syst. Biol.">
        <title>Initial characterization of the human central proteome.</title>
        <authorList>
            <person name="Burkard T.R."/>
            <person name="Planyavsky M."/>
            <person name="Kaupe I."/>
            <person name="Breitwieser F.P."/>
            <person name="Buerckstuemmer T."/>
            <person name="Bennett K.L."/>
            <person name="Superti-Furga G."/>
            <person name="Colinge J."/>
        </authorList>
    </citation>
    <scope>IDENTIFICATION BY MASS SPECTROMETRY [LARGE SCALE ANALYSIS]</scope>
</reference>
<reference key="7">
    <citation type="journal article" date="2014" name="J. Proteomics">
        <title>An enzyme assisted RP-RPLC approach for in-depth analysis of human liver phosphoproteome.</title>
        <authorList>
            <person name="Bian Y."/>
            <person name="Song C."/>
            <person name="Cheng K."/>
            <person name="Dong M."/>
            <person name="Wang F."/>
            <person name="Huang J."/>
            <person name="Sun D."/>
            <person name="Wang L."/>
            <person name="Ye M."/>
            <person name="Zou H."/>
        </authorList>
    </citation>
    <scope>IDENTIFICATION BY MASS SPECTROMETRY [LARGE SCALE ANALYSIS]</scope>
    <source>
        <tissue>Liver</tissue>
    </source>
</reference>
<reference key="8">
    <citation type="journal article" date="2015" name="Proteomics">
        <title>N-terminome analysis of the human mitochondrial proteome.</title>
        <authorList>
            <person name="Vaca Jacome A.S."/>
            <person name="Rabilloud T."/>
            <person name="Schaeffer-Reiss C."/>
            <person name="Rompais M."/>
            <person name="Ayoub D."/>
            <person name="Lane L."/>
            <person name="Bairoch A."/>
            <person name="Van Dorsselaer A."/>
            <person name="Carapito C."/>
        </authorList>
    </citation>
    <scope>IDENTIFICATION BY MASS SPECTROMETRY [LARGE SCALE ANALYSIS]</scope>
</reference>
<reference key="9">
    <citation type="journal article" date="2019" name="IScience">
        <title>Rewiring of the Human Mitochondrial Interactome during Neuronal Reprogramming Reveals Regulators of the Respirasome and Neurogenesis.</title>
        <authorList>
            <person name="Moutaoufik M.T."/>
            <person name="Malty R."/>
            <person name="Amin S."/>
            <person name="Zhang Q."/>
            <person name="Phanse S."/>
            <person name="Gagarinova A."/>
            <person name="Zilocchi M."/>
            <person name="Hoell L."/>
            <person name="Minic Z."/>
            <person name="Gagarinova M."/>
            <person name="Aoki H."/>
            <person name="Stockwell J."/>
            <person name="Jessulat M."/>
            <person name="Goebels F."/>
            <person name="Broderick K."/>
            <person name="Scott N.E."/>
            <person name="Vlasblom J."/>
            <person name="Musso G."/>
            <person name="Prasad B."/>
            <person name="Lamantea E."/>
            <person name="Garavaglia B."/>
            <person name="Rajput A."/>
            <person name="Murayama K."/>
            <person name="Okazaki Y."/>
            <person name="Foster L.J."/>
            <person name="Bader G.D."/>
            <person name="Cayabyab F.S."/>
            <person name="Babu M."/>
        </authorList>
    </citation>
    <scope>IDENTIFICATION BY MASS SPECTROMETRY</scope>
    <scope>INTERACTION WITH RAB5IF</scope>
</reference>
<reference key="10">
    <citation type="journal article" date="1998" name="Am. J. Hum. Genet.">
        <title>The first nuclear-encoded complex I mutation in a patient with Leigh syndrome.</title>
        <authorList>
            <person name="Loeffen J."/>
            <person name="Smeitink J."/>
            <person name="Triepels R."/>
            <person name="Smeets R."/>
            <person name="Schuelke M."/>
            <person name="Sengers R."/>
            <person name="Trijbels F."/>
            <person name="Hamel B.C.J."/>
            <person name="Mullaart R."/>
            <person name="van den Heuvel L."/>
        </authorList>
    </citation>
    <scope>INVOLVEMENT IN MC1DN2</scope>
    <scope>VARIANTS MC1DN2 LEU-79 AND HIS-102</scope>
</reference>
<reference key="11">
    <citation type="journal article" date="2004" name="Neurology">
        <title>Late-onset Leigh syndrome in a patient with mitochondrial complex I NDUFS8 mutations.</title>
        <authorList>
            <person name="Procaccio V."/>
            <person name="Wallace D.C."/>
        </authorList>
    </citation>
    <scope>VARIANTS MC1DN2 LEU-85 AND HIS-138</scope>
</reference>
<reference key="12">
    <citation type="journal article" date="2005" name="J. Mol. Med.">
        <title>Sequence analysis of nuclear genes encoding functionally important complex I subunits in children with encephalomyopathy.</title>
        <authorList>
            <person name="Hinttala R."/>
            <person name="Uusimaa J."/>
            <person name="Remes A.M."/>
            <person name="Rantala H."/>
            <person name="Hassinen I.E."/>
            <person name="Majamaa K."/>
        </authorList>
    </citation>
    <scope>VARIANT MC1DN2 CYS-18</scope>
</reference>
<reference key="13">
    <citation type="journal article" date="2012" name="J. Med. Genet.">
        <title>Molecular diagnosis in mitochondrial complex I deficiency using exome sequencing.</title>
        <authorList>
            <person name="Haack T.B."/>
            <person name="Haberberger B."/>
            <person name="Frisch E.M."/>
            <person name="Wieland T."/>
            <person name="Iuso A."/>
            <person name="Gorza M."/>
            <person name="Strecker V."/>
            <person name="Graf E."/>
            <person name="Mayr J.A."/>
            <person name="Herberg U."/>
            <person name="Hennermann J.B."/>
            <person name="Klopstock T."/>
            <person name="Kuhn K.A."/>
            <person name="Ahting U."/>
            <person name="Sperl W."/>
            <person name="Wilichowski E."/>
            <person name="Hoffmann G.F."/>
            <person name="Tesarova M."/>
            <person name="Hansikova H."/>
            <person name="Zeman J."/>
            <person name="Plecko B."/>
            <person name="Zeviani M."/>
            <person name="Wittig I."/>
            <person name="Strom T.M."/>
            <person name="Schuelke M."/>
            <person name="Freisinger P."/>
            <person name="Meitinger T."/>
            <person name="Prokisch H."/>
        </authorList>
    </citation>
    <scope>VARIANTS MC1DN2 GLN-63; TRP-77 AND ASP-159</scope>
    <scope>CHARACTERIZATION OF VARIANTS MC1DN2 GLN-63; TRP-77 AND ASP-159</scope>
    <scope>FUNCTION</scope>
    <scope>CATALYTIC ACTIVITY</scope>
</reference>
<name>NDUS8_HUMAN</name>
<feature type="transit peptide" description="Mitochondrion" evidence="1">
    <location>
        <begin position="1"/>
        <end position="34"/>
    </location>
</feature>
<feature type="chain" id="PRO_0000020012" description="NADH dehydrogenase [ubiquinone] iron-sulfur protein 8, mitochondrial">
    <location>
        <begin position="35"/>
        <end position="210"/>
    </location>
</feature>
<feature type="domain" description="4Fe-4S ferredoxin-type 1" evidence="3">
    <location>
        <begin position="102"/>
        <end position="131"/>
    </location>
</feature>
<feature type="domain" description="4Fe-4S ferredoxin-type 2" evidence="3">
    <location>
        <begin position="141"/>
        <end position="170"/>
    </location>
</feature>
<feature type="binding site" evidence="3">
    <location>
        <position position="111"/>
    </location>
    <ligand>
        <name>[4Fe-4S] cluster</name>
        <dbReference type="ChEBI" id="CHEBI:49883"/>
        <label>1</label>
    </ligand>
</feature>
<feature type="binding site" evidence="3">
    <location>
        <position position="114"/>
    </location>
    <ligand>
        <name>[4Fe-4S] cluster</name>
        <dbReference type="ChEBI" id="CHEBI:49883"/>
        <label>1</label>
    </ligand>
</feature>
<feature type="binding site" evidence="3">
    <location>
        <position position="117"/>
    </location>
    <ligand>
        <name>[4Fe-4S] cluster</name>
        <dbReference type="ChEBI" id="CHEBI:49883"/>
        <label>1</label>
    </ligand>
</feature>
<feature type="binding site" evidence="3">
    <location>
        <position position="121"/>
    </location>
    <ligand>
        <name>[4Fe-4S] cluster</name>
        <dbReference type="ChEBI" id="CHEBI:49883"/>
        <label>1</label>
    </ligand>
</feature>
<feature type="binding site" evidence="3">
    <location>
        <position position="150"/>
    </location>
    <ligand>
        <name>[4Fe-4S] cluster</name>
        <dbReference type="ChEBI" id="CHEBI:49883"/>
        <label>2</label>
    </ligand>
</feature>
<feature type="binding site" evidence="3">
    <location>
        <position position="153"/>
    </location>
    <ligand>
        <name>[4Fe-4S] cluster</name>
        <dbReference type="ChEBI" id="CHEBI:49883"/>
        <label>2</label>
    </ligand>
</feature>
<feature type="binding site" evidence="3">
    <location>
        <position position="156"/>
    </location>
    <ligand>
        <name>[4Fe-4S] cluster</name>
        <dbReference type="ChEBI" id="CHEBI:49883"/>
        <label>2</label>
    </ligand>
</feature>
<feature type="binding site" evidence="3">
    <location>
        <position position="160"/>
    </location>
    <ligand>
        <name>[4Fe-4S] cluster</name>
        <dbReference type="ChEBI" id="CHEBI:49883"/>
        <label>2</label>
    </ligand>
</feature>
<feature type="sequence variant" id="VAR_083603" description="In MC1DN2; uncertain significance; dbSNP:rs750062334." evidence="6">
    <original>R</original>
    <variation>C</variation>
    <location>
        <position position="18"/>
    </location>
</feature>
<feature type="sequence variant" id="VAR_081440" description="In MC1DN2; decrease in enzyme activity; impaired assembly of complex I; dbSNP:rs397514618." evidence="7">
    <original>E</original>
    <variation>Q</variation>
    <location>
        <position position="63"/>
    </location>
</feature>
<feature type="sequence variant" id="VAR_081441" description="In MC1DN2; uncertain significance; decrease in enzyme activity; impaired assembly of complex I; dbSNP:rs146766138." evidence="7">
    <original>R</original>
    <variation>W</variation>
    <location>
        <position position="77"/>
    </location>
</feature>
<feature type="sequence variant" id="VAR_019538" description="In MC1DN2; dbSNP:rs28939679." evidence="10">
    <original>P</original>
    <variation>L</variation>
    <location>
        <position position="79"/>
    </location>
</feature>
<feature type="sequence variant" id="VAR_081442" description="In MC1DN2; uncertain significance; dbSNP:rs121912639." evidence="5">
    <original>P</original>
    <variation>L</variation>
    <location>
        <position position="85"/>
    </location>
</feature>
<feature type="sequence variant" id="VAR_019539" description="In MC1DN2; dbSNP:rs121912638." evidence="10">
    <original>R</original>
    <variation>H</variation>
    <location>
        <position position="102"/>
    </location>
</feature>
<feature type="sequence variant" id="VAR_081443" description="In MC1DN2; uncertain significance; dbSNP:rs111033588." evidence="5">
    <original>R</original>
    <variation>H</variation>
    <location>
        <position position="138"/>
    </location>
</feature>
<feature type="sequence variant" id="VAR_081444" description="In MC1DN2; uncertain significance; decrease in enzyme activity; impaired assembly of complex I; dbSNP:rs397514617." evidence="7">
    <original>A</original>
    <variation>D</variation>
    <location>
        <position position="159"/>
    </location>
</feature>
<feature type="strand" evidence="14">
    <location>
        <begin position="36"/>
        <end position="38"/>
    </location>
</feature>
<feature type="helix" evidence="14">
    <location>
        <begin position="48"/>
        <end position="60"/>
    </location>
</feature>
<feature type="helix" evidence="14">
    <location>
        <begin position="63"/>
        <end position="76"/>
    </location>
</feature>
<feature type="turn" evidence="14">
    <location>
        <begin position="84"/>
        <end position="86"/>
    </location>
</feature>
<feature type="strand" evidence="14">
    <location>
        <begin position="98"/>
        <end position="101"/>
    </location>
</feature>
<feature type="helix" evidence="14">
    <location>
        <begin position="117"/>
        <end position="120"/>
    </location>
</feature>
<feature type="strand" evidence="14">
    <location>
        <begin position="130"/>
        <end position="132"/>
    </location>
</feature>
<feature type="strand" evidence="14">
    <location>
        <begin position="138"/>
        <end position="141"/>
    </location>
</feature>
<feature type="strand" evidence="14">
    <location>
        <begin position="144"/>
        <end position="146"/>
    </location>
</feature>
<feature type="turn" evidence="14">
    <location>
        <begin position="147"/>
        <end position="149"/>
    </location>
</feature>
<feature type="helix" evidence="14">
    <location>
        <begin position="155"/>
        <end position="159"/>
    </location>
</feature>
<feature type="strand" evidence="14">
    <location>
        <begin position="165"/>
        <end position="167"/>
    </location>
</feature>
<feature type="strand" evidence="14">
    <location>
        <begin position="175"/>
        <end position="177"/>
    </location>
</feature>
<feature type="helix" evidence="14">
    <location>
        <begin position="178"/>
        <end position="181"/>
    </location>
</feature>
<feature type="strand" evidence="14">
    <location>
        <begin position="182"/>
        <end position="184"/>
    </location>
</feature>
<feature type="helix" evidence="14">
    <location>
        <begin position="185"/>
        <end position="194"/>
    </location>
</feature>
<feature type="helix" evidence="14">
    <location>
        <begin position="196"/>
        <end position="206"/>
    </location>
</feature>
<feature type="helix" evidence="14">
    <location>
        <begin position="207"/>
        <end position="209"/>
    </location>
</feature>
<proteinExistence type="evidence at protein level"/>
<keyword id="KW-0002">3D-structure</keyword>
<keyword id="KW-0004">4Fe-4S</keyword>
<keyword id="KW-0225">Disease variant</keyword>
<keyword id="KW-0249">Electron transport</keyword>
<keyword id="KW-0408">Iron</keyword>
<keyword id="KW-0411">Iron-sulfur</keyword>
<keyword id="KW-0472">Membrane</keyword>
<keyword id="KW-0479">Metal-binding</keyword>
<keyword id="KW-0496">Mitochondrion</keyword>
<keyword id="KW-0999">Mitochondrion inner membrane</keyword>
<keyword id="KW-0520">NAD</keyword>
<keyword id="KW-0560">Oxidoreductase</keyword>
<keyword id="KW-1274">Primary mitochondrial disease</keyword>
<keyword id="KW-1267">Proteomics identification</keyword>
<keyword id="KW-1185">Reference proteome</keyword>
<keyword id="KW-0677">Repeat</keyword>
<keyword id="KW-0679">Respiratory chain</keyword>
<keyword id="KW-0809">Transit peptide</keyword>
<keyword id="KW-1278">Translocase</keyword>
<keyword id="KW-0813">Transport</keyword>
<keyword id="KW-0830">Ubiquinone</keyword>
<sequence length="210" mass="23705">MRCLTTPMLLRALAQAARAGPPGGRSLHSSAVAATYKYVNMQDPEMDMKSVTDRAARTLLWTELFRGLGMTLSYLFREPATINYPFEKGPLSPRFRGEHALRRYPSGEERCIACKLCEAICPAQAITIEAEPRADGSRRTTRYDIDMTKCIYCGFCQEACPVDAIVEGPNFEFSTETHEELLYNKEKLLNNGDKWEAEIAANIQADYLYR</sequence>
<protein>
    <recommendedName>
        <fullName>NADH dehydrogenase [ubiquinone] iron-sulfur protein 8, mitochondrial</fullName>
        <ecNumber evidence="7">7.1.1.2</ecNumber>
    </recommendedName>
    <alternativeName>
        <fullName>Complex I-23kD</fullName>
        <shortName>CI-23kD</shortName>
    </alternativeName>
    <alternativeName>
        <fullName>NADH-ubiquinone oxidoreductase 23 kDa subunit</fullName>
    </alternativeName>
    <alternativeName>
        <fullName>TYKY subunit</fullName>
    </alternativeName>
</protein>
<gene>
    <name type="primary">NDUFS8</name>
</gene>
<dbReference type="EC" id="7.1.1.2" evidence="7"/>
<dbReference type="EMBL" id="U65579">
    <property type="protein sequence ID" value="AAB51776.1"/>
    <property type="molecule type" value="mRNA"/>
</dbReference>
<dbReference type="EMBL" id="AF038406">
    <property type="protein sequence ID" value="AAC34273.1"/>
    <property type="molecule type" value="Genomic_DNA"/>
</dbReference>
<dbReference type="EMBL" id="AK314546">
    <property type="protein sequence ID" value="BAG37133.1"/>
    <property type="molecule type" value="mRNA"/>
</dbReference>
<dbReference type="EMBL" id="BC119754">
    <property type="protein sequence ID" value="AAI19755.1"/>
    <property type="molecule type" value="mRNA"/>
</dbReference>
<dbReference type="CCDS" id="CCDS8176.1"/>
<dbReference type="RefSeq" id="NP_002487.1">
    <property type="nucleotide sequence ID" value="NM_002496.4"/>
</dbReference>
<dbReference type="RefSeq" id="XP_005274070.1">
    <property type="nucleotide sequence ID" value="XM_005274013.1"/>
</dbReference>
<dbReference type="RefSeq" id="XP_005274071.1">
    <property type="nucleotide sequence ID" value="XM_005274014.2"/>
</dbReference>
<dbReference type="RefSeq" id="XP_011543355.1">
    <property type="nucleotide sequence ID" value="XM_011545053.2"/>
</dbReference>
<dbReference type="PDB" id="5XTB">
    <property type="method" value="EM"/>
    <property type="resolution" value="3.40 A"/>
    <property type="chains" value="B=35-210"/>
</dbReference>
<dbReference type="PDB" id="5XTD">
    <property type="method" value="EM"/>
    <property type="resolution" value="3.70 A"/>
    <property type="chains" value="B=35-210"/>
</dbReference>
<dbReference type="PDB" id="5XTH">
    <property type="method" value="EM"/>
    <property type="resolution" value="3.90 A"/>
    <property type="chains" value="B=35-210"/>
</dbReference>
<dbReference type="PDB" id="5XTI">
    <property type="method" value="EM"/>
    <property type="resolution" value="17.40 A"/>
    <property type="chains" value="B/BB=35-210"/>
</dbReference>
<dbReference type="PDBsum" id="5XTB"/>
<dbReference type="PDBsum" id="5XTD"/>
<dbReference type="PDBsum" id="5XTH"/>
<dbReference type="PDBsum" id="5XTI"/>
<dbReference type="SMR" id="O00217"/>
<dbReference type="BioGRID" id="110806">
    <property type="interactions" value="264"/>
</dbReference>
<dbReference type="ComplexPortal" id="CPX-577">
    <property type="entry name" value="Mitochondrial respiratory chain complex I"/>
</dbReference>
<dbReference type="CORUM" id="O00217"/>
<dbReference type="FunCoup" id="O00217">
    <property type="interactions" value="1785"/>
</dbReference>
<dbReference type="IntAct" id="O00217">
    <property type="interactions" value="71"/>
</dbReference>
<dbReference type="MINT" id="O00217"/>
<dbReference type="STRING" id="9606.ENSP00000315774"/>
<dbReference type="BindingDB" id="O00217"/>
<dbReference type="ChEMBL" id="CHEMBL2363065"/>
<dbReference type="DrugBank" id="DB00157">
    <property type="generic name" value="NADH"/>
</dbReference>
<dbReference type="DrugCentral" id="O00217"/>
<dbReference type="CarbonylDB" id="O00217"/>
<dbReference type="GlyGen" id="O00217">
    <property type="glycosylation" value="1 site, 1 O-linked glycan (1 site)"/>
</dbReference>
<dbReference type="iPTMnet" id="O00217"/>
<dbReference type="PhosphoSitePlus" id="O00217"/>
<dbReference type="SwissPalm" id="O00217"/>
<dbReference type="BioMuta" id="NDUFS8"/>
<dbReference type="OGP" id="O00217"/>
<dbReference type="jPOST" id="O00217"/>
<dbReference type="MassIVE" id="O00217"/>
<dbReference type="PaxDb" id="9606-ENSP00000315774"/>
<dbReference type="PeptideAtlas" id="O00217"/>
<dbReference type="ProteomicsDB" id="47787"/>
<dbReference type="Pumba" id="O00217"/>
<dbReference type="TopDownProteomics" id="O00217"/>
<dbReference type="Antibodypedia" id="1263">
    <property type="antibodies" value="261 antibodies from 33 providers"/>
</dbReference>
<dbReference type="DNASU" id="4728"/>
<dbReference type="Ensembl" id="ENST00000313468.10">
    <property type="protein sequence ID" value="ENSP00000315774.5"/>
    <property type="gene ID" value="ENSG00000110717.13"/>
</dbReference>
<dbReference type="GeneID" id="4728"/>
<dbReference type="KEGG" id="hsa:4728"/>
<dbReference type="MANE-Select" id="ENST00000313468.10">
    <property type="protein sequence ID" value="ENSP00000315774.5"/>
    <property type="RefSeq nucleotide sequence ID" value="NM_002496.4"/>
    <property type="RefSeq protein sequence ID" value="NP_002487.1"/>
</dbReference>
<dbReference type="UCSC" id="uc001onc.4">
    <property type="organism name" value="human"/>
</dbReference>
<dbReference type="AGR" id="HGNC:7715"/>
<dbReference type="CTD" id="4728"/>
<dbReference type="DisGeNET" id="4728"/>
<dbReference type="GeneCards" id="NDUFS8"/>
<dbReference type="GeneReviews" id="NDUFS8"/>
<dbReference type="HGNC" id="HGNC:7715">
    <property type="gene designation" value="NDUFS8"/>
</dbReference>
<dbReference type="HPA" id="ENSG00000110717">
    <property type="expression patterns" value="Low tissue specificity"/>
</dbReference>
<dbReference type="MalaCards" id="NDUFS8"/>
<dbReference type="MIM" id="602141">
    <property type="type" value="gene"/>
</dbReference>
<dbReference type="MIM" id="618222">
    <property type="type" value="phenotype"/>
</dbReference>
<dbReference type="neXtProt" id="NX_O00217"/>
<dbReference type="OpenTargets" id="ENSG00000110717"/>
<dbReference type="Orphanet" id="2609">
    <property type="disease" value="Isolated complex I deficiency"/>
</dbReference>
<dbReference type="PharmGKB" id="PA31525"/>
<dbReference type="VEuPathDB" id="HostDB:ENSG00000110717"/>
<dbReference type="eggNOG" id="KOG3256">
    <property type="taxonomic scope" value="Eukaryota"/>
</dbReference>
<dbReference type="GeneTree" id="ENSGT00390000003049"/>
<dbReference type="HOGENOM" id="CLU_067218_5_1_1"/>
<dbReference type="InParanoid" id="O00217"/>
<dbReference type="OMA" id="WYPDFFR"/>
<dbReference type="OrthoDB" id="204405at2759"/>
<dbReference type="PAN-GO" id="O00217">
    <property type="GO annotations" value="5 GO annotations based on evolutionary models"/>
</dbReference>
<dbReference type="PhylomeDB" id="O00217"/>
<dbReference type="TreeFam" id="TF105610"/>
<dbReference type="BioCyc" id="MetaCyc:HS03332-MONOMER"/>
<dbReference type="PathwayCommons" id="O00217"/>
<dbReference type="Reactome" id="R-HSA-611105">
    <property type="pathway name" value="Respiratory electron transport"/>
</dbReference>
<dbReference type="Reactome" id="R-HSA-6799198">
    <property type="pathway name" value="Complex I biogenesis"/>
</dbReference>
<dbReference type="SignaLink" id="O00217"/>
<dbReference type="SIGNOR" id="O00217"/>
<dbReference type="BioGRID-ORCS" id="4728">
    <property type="hits" value="296 hits in 1173 CRISPR screens"/>
</dbReference>
<dbReference type="CD-CODE" id="91857CE7">
    <property type="entry name" value="Nucleolus"/>
</dbReference>
<dbReference type="ChiTaRS" id="NDUFS8">
    <property type="organism name" value="human"/>
</dbReference>
<dbReference type="GeneWiki" id="NDUFS8"/>
<dbReference type="GenomeRNAi" id="4728"/>
<dbReference type="Pharos" id="O00217">
    <property type="development level" value="Tclin"/>
</dbReference>
<dbReference type="PRO" id="PR:O00217"/>
<dbReference type="Proteomes" id="UP000005640">
    <property type="component" value="Chromosome 11"/>
</dbReference>
<dbReference type="RNAct" id="O00217">
    <property type="molecule type" value="protein"/>
</dbReference>
<dbReference type="Bgee" id="ENSG00000110717">
    <property type="expression patterns" value="Expressed in apex of heart and 208 other cell types or tissues"/>
</dbReference>
<dbReference type="ExpressionAtlas" id="O00217">
    <property type="expression patterns" value="baseline and differential"/>
</dbReference>
<dbReference type="GO" id="GO:0005743">
    <property type="term" value="C:mitochondrial inner membrane"/>
    <property type="evidence" value="ECO:0000314"/>
    <property type="project" value="ComplexPortal"/>
</dbReference>
<dbReference type="GO" id="GO:0005759">
    <property type="term" value="C:mitochondrial matrix"/>
    <property type="evidence" value="ECO:0000304"/>
    <property type="project" value="Reactome"/>
</dbReference>
<dbReference type="GO" id="GO:0005739">
    <property type="term" value="C:mitochondrion"/>
    <property type="evidence" value="ECO:0000314"/>
    <property type="project" value="UniProtKB"/>
</dbReference>
<dbReference type="GO" id="GO:0045271">
    <property type="term" value="C:respiratory chain complex I"/>
    <property type="evidence" value="ECO:0000314"/>
    <property type="project" value="UniProtKB"/>
</dbReference>
<dbReference type="GO" id="GO:0051539">
    <property type="term" value="F:4 iron, 4 sulfur cluster binding"/>
    <property type="evidence" value="ECO:0007669"/>
    <property type="project" value="UniProtKB-KW"/>
</dbReference>
<dbReference type="GO" id="GO:0046872">
    <property type="term" value="F:metal ion binding"/>
    <property type="evidence" value="ECO:0007669"/>
    <property type="project" value="UniProtKB-KW"/>
</dbReference>
<dbReference type="GO" id="GO:0008137">
    <property type="term" value="F:NADH dehydrogenase (ubiquinone) activity"/>
    <property type="evidence" value="ECO:0000315"/>
    <property type="project" value="UniProtKB"/>
</dbReference>
<dbReference type="GO" id="GO:0009060">
    <property type="term" value="P:aerobic respiration"/>
    <property type="evidence" value="ECO:0000303"/>
    <property type="project" value="ComplexPortal"/>
</dbReference>
<dbReference type="GO" id="GO:0006120">
    <property type="term" value="P:mitochondrial electron transport, NADH to ubiquinone"/>
    <property type="evidence" value="ECO:0000315"/>
    <property type="project" value="UniProtKB"/>
</dbReference>
<dbReference type="GO" id="GO:0032981">
    <property type="term" value="P:mitochondrial respiratory chain complex I assembly"/>
    <property type="evidence" value="ECO:0000315"/>
    <property type="project" value="UniProtKB"/>
</dbReference>
<dbReference type="GO" id="GO:0042776">
    <property type="term" value="P:proton motive force-driven mitochondrial ATP synthesis"/>
    <property type="evidence" value="ECO:0000303"/>
    <property type="project" value="ComplexPortal"/>
</dbReference>
<dbReference type="FunFam" id="3.30.70.3270:FF:000001">
    <property type="entry name" value="NADH-quinone oxidoreductase subunit I 1"/>
    <property type="match status" value="1"/>
</dbReference>
<dbReference type="Gene3D" id="3.30.70.3270">
    <property type="match status" value="1"/>
</dbReference>
<dbReference type="HAMAP" id="MF_01351">
    <property type="entry name" value="NDH1_NuoI"/>
    <property type="match status" value="1"/>
</dbReference>
<dbReference type="InterPro" id="IPR017896">
    <property type="entry name" value="4Fe4S_Fe-S-bd"/>
</dbReference>
<dbReference type="InterPro" id="IPR017900">
    <property type="entry name" value="4Fe4S_Fe_S_CS"/>
</dbReference>
<dbReference type="InterPro" id="IPR010226">
    <property type="entry name" value="NADH_quinone_OxRdtase_chainI"/>
</dbReference>
<dbReference type="NCBIfam" id="TIGR01971">
    <property type="entry name" value="NuoI"/>
    <property type="match status" value="1"/>
</dbReference>
<dbReference type="NCBIfam" id="NF004538">
    <property type="entry name" value="PRK05888.1-4"/>
    <property type="match status" value="1"/>
</dbReference>
<dbReference type="NCBIfam" id="NF004539">
    <property type="entry name" value="PRK05888.1-5"/>
    <property type="match status" value="1"/>
</dbReference>
<dbReference type="PANTHER" id="PTHR10849:SF20">
    <property type="entry name" value="NADH DEHYDROGENASE [UBIQUINONE] IRON-SULFUR PROTEIN 8, MITOCHONDRIAL"/>
    <property type="match status" value="1"/>
</dbReference>
<dbReference type="PANTHER" id="PTHR10849">
    <property type="entry name" value="NADH DEHYDROGENASE UBIQUINONE IRON-SULFUR PROTEIN 8, MITOCHONDRIAL"/>
    <property type="match status" value="1"/>
</dbReference>
<dbReference type="Pfam" id="PF12838">
    <property type="entry name" value="Fer4_7"/>
    <property type="match status" value="1"/>
</dbReference>
<dbReference type="SUPFAM" id="SSF54862">
    <property type="entry name" value="4Fe-4S ferredoxins"/>
    <property type="match status" value="1"/>
</dbReference>
<dbReference type="PROSITE" id="PS00198">
    <property type="entry name" value="4FE4S_FER_1"/>
    <property type="match status" value="2"/>
</dbReference>
<dbReference type="PROSITE" id="PS51379">
    <property type="entry name" value="4FE4S_FER_2"/>
    <property type="match status" value="2"/>
</dbReference>
<evidence type="ECO:0000250" key="1">
    <source>
        <dbReference type="UniProtKB" id="P42028"/>
    </source>
</evidence>
<evidence type="ECO:0000250" key="2">
    <source>
        <dbReference type="UniProtKB" id="Q56224"/>
    </source>
</evidence>
<evidence type="ECO:0000255" key="3">
    <source>
        <dbReference type="PROSITE-ProRule" id="PRU00711"/>
    </source>
</evidence>
<evidence type="ECO:0000269" key="4">
    <source>
    </source>
</evidence>
<evidence type="ECO:0000269" key="5">
    <source>
    </source>
</evidence>
<evidence type="ECO:0000269" key="6">
    <source>
    </source>
</evidence>
<evidence type="ECO:0000269" key="7">
    <source>
    </source>
</evidence>
<evidence type="ECO:0000269" key="8">
    <source>
    </source>
</evidence>
<evidence type="ECO:0000269" key="9">
    <source>
    </source>
</evidence>
<evidence type="ECO:0000269" key="10">
    <source>
    </source>
</evidence>
<evidence type="ECO:0000305" key="11"/>
<evidence type="ECO:0000305" key="12">
    <source>
    </source>
</evidence>
<evidence type="ECO:0000305" key="13">
    <source>
    </source>
</evidence>
<evidence type="ECO:0007829" key="14">
    <source>
        <dbReference type="PDB" id="5XTB"/>
    </source>
</evidence>
<organism>
    <name type="scientific">Homo sapiens</name>
    <name type="common">Human</name>
    <dbReference type="NCBI Taxonomy" id="9606"/>
    <lineage>
        <taxon>Eukaryota</taxon>
        <taxon>Metazoa</taxon>
        <taxon>Chordata</taxon>
        <taxon>Craniata</taxon>
        <taxon>Vertebrata</taxon>
        <taxon>Euteleostomi</taxon>
        <taxon>Mammalia</taxon>
        <taxon>Eutheria</taxon>
        <taxon>Euarchontoglires</taxon>
        <taxon>Primates</taxon>
        <taxon>Haplorrhini</taxon>
        <taxon>Catarrhini</taxon>
        <taxon>Hominidae</taxon>
        <taxon>Homo</taxon>
    </lineage>
</organism>
<accession>O00217</accession>
<accession>B2RB86</accession>
<accession>Q0VDA8</accession>